<accession>Q9MTI4</accession>
<accession>A9IKT0</accession>
<evidence type="ECO:0000250" key="1"/>
<evidence type="ECO:0000255" key="2"/>
<evidence type="ECO:0000305" key="3"/>
<keyword id="KW-0150">Chloroplast</keyword>
<keyword id="KW-0472">Membrane</keyword>
<keyword id="KW-0520">NAD</keyword>
<keyword id="KW-0521">NADP</keyword>
<keyword id="KW-0934">Plastid</keyword>
<keyword id="KW-0618">Plastoquinone</keyword>
<keyword id="KW-0874">Quinone</keyword>
<keyword id="KW-0793">Thylakoid</keyword>
<keyword id="KW-1278">Translocase</keyword>
<keyword id="KW-0812">Transmembrane</keyword>
<keyword id="KW-1133">Transmembrane helix</keyword>
<keyword id="KW-0813">Transport</keyword>
<name>NU5C_OENEH</name>
<feature type="chain" id="PRO_0000118196" description="NAD(P)H-quinone oxidoreductase subunit 5, chloroplastic">
    <location>
        <begin position="1"/>
        <end position="777"/>
    </location>
</feature>
<feature type="transmembrane region" description="Helical" evidence="2">
    <location>
        <begin position="9"/>
        <end position="29"/>
    </location>
</feature>
<feature type="transmembrane region" description="Helical" evidence="2">
    <location>
        <begin position="40"/>
        <end position="60"/>
    </location>
</feature>
<feature type="transmembrane region" description="Helical" evidence="2">
    <location>
        <begin position="89"/>
        <end position="109"/>
    </location>
</feature>
<feature type="transmembrane region" description="Helical" evidence="2">
    <location>
        <begin position="125"/>
        <end position="145"/>
    </location>
</feature>
<feature type="transmembrane region" description="Helical" evidence="2">
    <location>
        <begin position="147"/>
        <end position="167"/>
    </location>
</feature>
<feature type="transmembrane region" description="Helical" evidence="2">
    <location>
        <begin position="185"/>
        <end position="205"/>
    </location>
</feature>
<feature type="transmembrane region" description="Helical" evidence="2">
    <location>
        <begin position="220"/>
        <end position="240"/>
    </location>
</feature>
<feature type="transmembrane region" description="Helical" evidence="2">
    <location>
        <begin position="259"/>
        <end position="279"/>
    </location>
</feature>
<feature type="transmembrane region" description="Helical" evidence="2">
    <location>
        <begin position="290"/>
        <end position="312"/>
    </location>
</feature>
<feature type="transmembrane region" description="Helical" evidence="2">
    <location>
        <begin position="328"/>
        <end position="348"/>
    </location>
</feature>
<feature type="transmembrane region" description="Helical" evidence="2">
    <location>
        <begin position="355"/>
        <end position="375"/>
    </location>
</feature>
<feature type="transmembrane region" description="Helical" evidence="2">
    <location>
        <begin position="397"/>
        <end position="417"/>
    </location>
</feature>
<feature type="transmembrane region" description="Helical" evidence="2">
    <location>
        <begin position="426"/>
        <end position="446"/>
    </location>
</feature>
<feature type="transmembrane region" description="Helical" evidence="2">
    <location>
        <begin position="550"/>
        <end position="570"/>
    </location>
</feature>
<feature type="transmembrane region" description="Helical" evidence="2">
    <location>
        <begin position="604"/>
        <end position="624"/>
    </location>
</feature>
<feature type="transmembrane region" description="Helical" evidence="2">
    <location>
        <begin position="731"/>
        <end position="751"/>
    </location>
</feature>
<protein>
    <recommendedName>
        <fullName>NAD(P)H-quinone oxidoreductase subunit 5, chloroplastic</fullName>
        <ecNumber>7.1.1.-</ecNumber>
    </recommendedName>
    <alternativeName>
        <fullName>NAD(P)H dehydrogenase subunit 5</fullName>
    </alternativeName>
    <alternativeName>
        <fullName>NADH-plastoquinone oxidoreductase subunit 5</fullName>
    </alternativeName>
</protein>
<sequence>MEYTYQYSWIIPFIPLPVPILIGMGLLLFPTATKNHRRVWSFPSILLLSMVMLLSVYLSIQQINRSFIYQYVWSWTINNDFSLEFGHLIDPLASIMLILITTVGILVLFYSDNYMSHDQGYLRFFAYLSFFNTSMLGLVTSSNLIQIYIFWELVGMCSYLLIGFWFTRPIAATACQKAFVTNRVGDFGLLLGILGLYWITGSFEFRDLFEIVNNLIDNNNQVHFLFVTLCSFLLFAGAVAKSAQFPLHVWLPDAMEGPTPISALIHAATMVAAGIFLVARLLPLFVITPYIMNLISLIGIITVLLGATLALAQKDIKRSLAYSTMSQLGYMMLALGMGSYRAALFHLITHAYSKALLFLGSGSIIHSMESIVGYSPDKSQNMVLMGGLKKHVPITKTAFLVGTLSLCGIPPLACFWSKDEILNDSWLYSPIFAIIACSTAGFTAFYMFRVYLLTFDGHLNVHFQNYSGQKSSSVYSISLWGKQVPKRIQNPFCLLNLLTMNNNESTSFFWNNKCKLDGNVKKRIRPFITVTHFPNRKTFSYPHESDNTMLFSLFVLVLFTLFVAAIGIPFNQEGSDCDILSKLLNPSINLLHQNSNNFTDWYEFVTNASFSVSIALLGIFIATFLYKPIYSSLQNFNLLNSFYKRSANRVMWDKIQNWIYDWSYNRGYIDSFYTISLTGGIRGLAELSHFFDRRVIDGILNGFGLTSFFLGESLKYFGGGRISSYLLLYSIFIFIFLLMDSFFTNLPFFVLCQFLDSSFSMSISGFLLYENFLYENF</sequence>
<proteinExistence type="inferred from homology"/>
<organism>
    <name type="scientific">Oenothera elata subsp. hookeri</name>
    <name type="common">Hooker's evening primrose</name>
    <name type="synonym">Oenothera hookeri</name>
    <dbReference type="NCBI Taxonomy" id="85636"/>
    <lineage>
        <taxon>Eukaryota</taxon>
        <taxon>Viridiplantae</taxon>
        <taxon>Streptophyta</taxon>
        <taxon>Embryophyta</taxon>
        <taxon>Tracheophyta</taxon>
        <taxon>Spermatophyta</taxon>
        <taxon>Magnoliopsida</taxon>
        <taxon>eudicotyledons</taxon>
        <taxon>Gunneridae</taxon>
        <taxon>Pentapetalae</taxon>
        <taxon>rosids</taxon>
        <taxon>malvids</taxon>
        <taxon>Myrtales</taxon>
        <taxon>Onagraceae</taxon>
        <taxon>Onagroideae</taxon>
        <taxon>Onagreae</taxon>
        <taxon>Oenothera</taxon>
    </lineage>
</organism>
<geneLocation type="chloroplast"/>
<reference key="1">
    <citation type="journal article" date="2000" name="Mol. Gen. Genet.">
        <title>Complete nucleotide sequence of the Oenothera elata plastid chromosome, representing plastome I of the five distinguishable Euoenothera plastomes.</title>
        <authorList>
            <person name="Hupfer H."/>
            <person name="Swiatek M."/>
            <person name="Hornung S."/>
            <person name="Herrmann R.G."/>
            <person name="Maier R.M."/>
            <person name="Chiu W.-L."/>
            <person name="Sears B."/>
        </authorList>
    </citation>
    <scope>NUCLEOTIDE SEQUENCE [LARGE SCALE GENOMIC DNA]</scope>
    <source>
        <strain>cv. Johansen</strain>
    </source>
</reference>
<reference key="2">
    <citation type="journal article" date="2008" name="Nucleic Acids Res.">
        <title>The complete nucleotide sequences of the five genetically distinct plastid genomes of Oenothera, subsection Oenothera: I. Sequence evaluation and plastome evolution.</title>
        <authorList>
            <person name="Greiner S."/>
            <person name="Wang X."/>
            <person name="Rauwolf U."/>
            <person name="Silber M.V."/>
            <person name="Mayer K."/>
            <person name="Meurer J."/>
            <person name="Haberer G."/>
            <person name="Herrmann R.G."/>
        </authorList>
    </citation>
    <scope>SEQUENCE REVISION TO 220-221; 543; 637; 724-740 AND 744</scope>
</reference>
<gene>
    <name type="primary">ndhF</name>
</gene>
<dbReference type="EC" id="7.1.1.-"/>
<dbReference type="EMBL" id="AJ271079">
    <property type="protein sequence ID" value="CAP58409.1"/>
    <property type="molecule type" value="Genomic_DNA"/>
</dbReference>
<dbReference type="RefSeq" id="NP_084749.2">
    <property type="nucleotide sequence ID" value="NC_002693.2"/>
</dbReference>
<dbReference type="SMR" id="Q9MTI4"/>
<dbReference type="GeneID" id="802781"/>
<dbReference type="GO" id="GO:0009535">
    <property type="term" value="C:chloroplast thylakoid membrane"/>
    <property type="evidence" value="ECO:0007669"/>
    <property type="project" value="UniProtKB-SubCell"/>
</dbReference>
<dbReference type="GO" id="GO:0008137">
    <property type="term" value="F:NADH dehydrogenase (ubiquinone) activity"/>
    <property type="evidence" value="ECO:0007669"/>
    <property type="project" value="InterPro"/>
</dbReference>
<dbReference type="GO" id="GO:0048038">
    <property type="term" value="F:quinone binding"/>
    <property type="evidence" value="ECO:0007669"/>
    <property type="project" value="UniProtKB-KW"/>
</dbReference>
<dbReference type="GO" id="GO:0042773">
    <property type="term" value="P:ATP synthesis coupled electron transport"/>
    <property type="evidence" value="ECO:0007669"/>
    <property type="project" value="InterPro"/>
</dbReference>
<dbReference type="GO" id="GO:0015990">
    <property type="term" value="P:electron transport coupled proton transport"/>
    <property type="evidence" value="ECO:0007669"/>
    <property type="project" value="TreeGrafter"/>
</dbReference>
<dbReference type="Gene3D" id="1.20.5.2700">
    <property type="match status" value="1"/>
</dbReference>
<dbReference type="InterPro" id="IPR002128">
    <property type="entry name" value="NADH_UbQ_OxRdtase_chlpt_su5_C"/>
</dbReference>
<dbReference type="InterPro" id="IPR018393">
    <property type="entry name" value="NADHpl_OxRdtase_5_subgr"/>
</dbReference>
<dbReference type="InterPro" id="IPR001750">
    <property type="entry name" value="ND/Mrp_TM"/>
</dbReference>
<dbReference type="InterPro" id="IPR003945">
    <property type="entry name" value="NU5C-like"/>
</dbReference>
<dbReference type="InterPro" id="IPR001516">
    <property type="entry name" value="Proton_antipo_N"/>
</dbReference>
<dbReference type="NCBIfam" id="TIGR01974">
    <property type="entry name" value="NDH_I_L"/>
    <property type="match status" value="1"/>
</dbReference>
<dbReference type="NCBIfam" id="NF005141">
    <property type="entry name" value="PRK06590.1"/>
    <property type="match status" value="1"/>
</dbReference>
<dbReference type="PANTHER" id="PTHR42829">
    <property type="entry name" value="NADH-UBIQUINONE OXIDOREDUCTASE CHAIN 5"/>
    <property type="match status" value="1"/>
</dbReference>
<dbReference type="PANTHER" id="PTHR42829:SF2">
    <property type="entry name" value="NADH-UBIQUINONE OXIDOREDUCTASE CHAIN 5"/>
    <property type="match status" value="1"/>
</dbReference>
<dbReference type="Pfam" id="PF01010">
    <property type="entry name" value="Proton_antipo_C"/>
    <property type="match status" value="1"/>
</dbReference>
<dbReference type="Pfam" id="PF00361">
    <property type="entry name" value="Proton_antipo_M"/>
    <property type="match status" value="1"/>
</dbReference>
<dbReference type="Pfam" id="PF00662">
    <property type="entry name" value="Proton_antipo_N"/>
    <property type="match status" value="1"/>
</dbReference>
<dbReference type="PRINTS" id="PR01434">
    <property type="entry name" value="NADHDHGNASE5"/>
</dbReference>
<dbReference type="PRINTS" id="PR01435">
    <property type="entry name" value="NPOXDRDTASE5"/>
</dbReference>
<comment type="function">
    <text evidence="1">NDH shuttles electrons from NAD(P)H:plastoquinone, via FMN and iron-sulfur (Fe-S) centers, to quinones in the photosynthetic chain and possibly in a chloroplast respiratory chain. The immediate electron acceptor for the enzyme in this species is believed to be plastoquinone. Couples the redox reaction to proton translocation, and thus conserves the redox energy in a proton gradient (By similarity).</text>
</comment>
<comment type="catalytic activity">
    <reaction>
        <text>a plastoquinone + NADH + (n+1) H(+)(in) = a plastoquinol + NAD(+) + n H(+)(out)</text>
        <dbReference type="Rhea" id="RHEA:42608"/>
        <dbReference type="Rhea" id="RHEA-COMP:9561"/>
        <dbReference type="Rhea" id="RHEA-COMP:9562"/>
        <dbReference type="ChEBI" id="CHEBI:15378"/>
        <dbReference type="ChEBI" id="CHEBI:17757"/>
        <dbReference type="ChEBI" id="CHEBI:57540"/>
        <dbReference type="ChEBI" id="CHEBI:57945"/>
        <dbReference type="ChEBI" id="CHEBI:62192"/>
    </reaction>
</comment>
<comment type="catalytic activity">
    <reaction>
        <text>a plastoquinone + NADPH + (n+1) H(+)(in) = a plastoquinol + NADP(+) + n H(+)(out)</text>
        <dbReference type="Rhea" id="RHEA:42612"/>
        <dbReference type="Rhea" id="RHEA-COMP:9561"/>
        <dbReference type="Rhea" id="RHEA-COMP:9562"/>
        <dbReference type="ChEBI" id="CHEBI:15378"/>
        <dbReference type="ChEBI" id="CHEBI:17757"/>
        <dbReference type="ChEBI" id="CHEBI:57783"/>
        <dbReference type="ChEBI" id="CHEBI:58349"/>
        <dbReference type="ChEBI" id="CHEBI:62192"/>
    </reaction>
</comment>
<comment type="subunit">
    <text evidence="1">NDH is composed of at least 16 different subunits, 5 of which are encoded in the nucleus.</text>
</comment>
<comment type="subcellular location">
    <subcellularLocation>
        <location evidence="1">Plastid</location>
        <location evidence="1">Chloroplast thylakoid membrane</location>
        <topology evidence="1">Multi-pass membrane protein</topology>
    </subcellularLocation>
</comment>
<comment type="similarity">
    <text evidence="3">Belongs to the complex I subunit 5 family.</text>
</comment>